<feature type="chain" id="PRO_0000293254" description="Small ribosomal subunit protein uS4">
    <location>
        <begin position="1"/>
        <end position="208"/>
    </location>
</feature>
<feature type="domain" description="S4 RNA-binding" evidence="1">
    <location>
        <begin position="98"/>
        <end position="161"/>
    </location>
</feature>
<sequence>MARYRGPVEKLERRLGVSLALKGERRLAGKSALDKRPYAPGQHGQRKTKISEYGLQLREKQKAKFMYGVSEKQFRRLFSEAARREGNTGALLIGLLEQRLDNVVYRMGFATTRRFARQLVTHGHILVNGKKVDIPSYRVTAGEKIEVAEKSKTNPQIVRAIELTNQTGIVAWVDVEKDKKYGIFTRIPEREEVVIPVEERYIVELYSK</sequence>
<proteinExistence type="inferred from homology"/>
<accession>A0RM35</accession>
<organism>
    <name type="scientific">Campylobacter fetus subsp. fetus (strain 82-40)</name>
    <dbReference type="NCBI Taxonomy" id="360106"/>
    <lineage>
        <taxon>Bacteria</taxon>
        <taxon>Pseudomonadati</taxon>
        <taxon>Campylobacterota</taxon>
        <taxon>Epsilonproteobacteria</taxon>
        <taxon>Campylobacterales</taxon>
        <taxon>Campylobacteraceae</taxon>
        <taxon>Campylobacter</taxon>
    </lineage>
</organism>
<name>RS4_CAMFF</name>
<dbReference type="EMBL" id="CP000487">
    <property type="protein sequence ID" value="ABK82358.1"/>
    <property type="molecule type" value="Genomic_DNA"/>
</dbReference>
<dbReference type="RefSeq" id="WP_002848035.1">
    <property type="nucleotide sequence ID" value="NC_008599.1"/>
</dbReference>
<dbReference type="SMR" id="A0RM35"/>
<dbReference type="GeneID" id="61063902"/>
<dbReference type="KEGG" id="cff:CFF8240_0058"/>
<dbReference type="eggNOG" id="COG0522">
    <property type="taxonomic scope" value="Bacteria"/>
</dbReference>
<dbReference type="HOGENOM" id="CLU_092403_0_1_7"/>
<dbReference type="Proteomes" id="UP000000760">
    <property type="component" value="Chromosome"/>
</dbReference>
<dbReference type="GO" id="GO:0015935">
    <property type="term" value="C:small ribosomal subunit"/>
    <property type="evidence" value="ECO:0007669"/>
    <property type="project" value="InterPro"/>
</dbReference>
<dbReference type="GO" id="GO:0019843">
    <property type="term" value="F:rRNA binding"/>
    <property type="evidence" value="ECO:0007669"/>
    <property type="project" value="UniProtKB-UniRule"/>
</dbReference>
<dbReference type="GO" id="GO:0003735">
    <property type="term" value="F:structural constituent of ribosome"/>
    <property type="evidence" value="ECO:0007669"/>
    <property type="project" value="InterPro"/>
</dbReference>
<dbReference type="GO" id="GO:0042274">
    <property type="term" value="P:ribosomal small subunit biogenesis"/>
    <property type="evidence" value="ECO:0007669"/>
    <property type="project" value="TreeGrafter"/>
</dbReference>
<dbReference type="GO" id="GO:0006412">
    <property type="term" value="P:translation"/>
    <property type="evidence" value="ECO:0007669"/>
    <property type="project" value="UniProtKB-UniRule"/>
</dbReference>
<dbReference type="CDD" id="cd00165">
    <property type="entry name" value="S4"/>
    <property type="match status" value="1"/>
</dbReference>
<dbReference type="FunFam" id="1.10.1050.10:FF:000001">
    <property type="entry name" value="30S ribosomal protein S4"/>
    <property type="match status" value="1"/>
</dbReference>
<dbReference type="FunFam" id="3.10.290.10:FF:000001">
    <property type="entry name" value="30S ribosomal protein S4"/>
    <property type="match status" value="1"/>
</dbReference>
<dbReference type="Gene3D" id="1.10.1050.10">
    <property type="entry name" value="Ribosomal Protein S4 Delta 41, Chain A, domain 1"/>
    <property type="match status" value="1"/>
</dbReference>
<dbReference type="Gene3D" id="3.10.290.10">
    <property type="entry name" value="RNA-binding S4 domain"/>
    <property type="match status" value="1"/>
</dbReference>
<dbReference type="HAMAP" id="MF_01306_B">
    <property type="entry name" value="Ribosomal_uS4_B"/>
    <property type="match status" value="1"/>
</dbReference>
<dbReference type="InterPro" id="IPR022801">
    <property type="entry name" value="Ribosomal_uS4"/>
</dbReference>
<dbReference type="InterPro" id="IPR005709">
    <property type="entry name" value="Ribosomal_uS4_bac-type"/>
</dbReference>
<dbReference type="InterPro" id="IPR018079">
    <property type="entry name" value="Ribosomal_uS4_CS"/>
</dbReference>
<dbReference type="InterPro" id="IPR001912">
    <property type="entry name" value="Ribosomal_uS4_N"/>
</dbReference>
<dbReference type="InterPro" id="IPR002942">
    <property type="entry name" value="S4_RNA-bd"/>
</dbReference>
<dbReference type="InterPro" id="IPR036986">
    <property type="entry name" value="S4_RNA-bd_sf"/>
</dbReference>
<dbReference type="NCBIfam" id="NF003717">
    <property type="entry name" value="PRK05327.1"/>
    <property type="match status" value="1"/>
</dbReference>
<dbReference type="NCBIfam" id="TIGR01017">
    <property type="entry name" value="rpsD_bact"/>
    <property type="match status" value="1"/>
</dbReference>
<dbReference type="PANTHER" id="PTHR11831">
    <property type="entry name" value="30S 40S RIBOSOMAL PROTEIN"/>
    <property type="match status" value="1"/>
</dbReference>
<dbReference type="PANTHER" id="PTHR11831:SF4">
    <property type="entry name" value="SMALL RIBOSOMAL SUBUNIT PROTEIN US4M"/>
    <property type="match status" value="1"/>
</dbReference>
<dbReference type="Pfam" id="PF00163">
    <property type="entry name" value="Ribosomal_S4"/>
    <property type="match status" value="1"/>
</dbReference>
<dbReference type="Pfam" id="PF01479">
    <property type="entry name" value="S4"/>
    <property type="match status" value="1"/>
</dbReference>
<dbReference type="SMART" id="SM01390">
    <property type="entry name" value="Ribosomal_S4"/>
    <property type="match status" value="1"/>
</dbReference>
<dbReference type="SMART" id="SM00363">
    <property type="entry name" value="S4"/>
    <property type="match status" value="1"/>
</dbReference>
<dbReference type="SUPFAM" id="SSF55174">
    <property type="entry name" value="Alpha-L RNA-binding motif"/>
    <property type="match status" value="1"/>
</dbReference>
<dbReference type="PROSITE" id="PS00632">
    <property type="entry name" value="RIBOSOMAL_S4"/>
    <property type="match status" value="1"/>
</dbReference>
<dbReference type="PROSITE" id="PS50889">
    <property type="entry name" value="S4"/>
    <property type="match status" value="1"/>
</dbReference>
<keyword id="KW-0687">Ribonucleoprotein</keyword>
<keyword id="KW-0689">Ribosomal protein</keyword>
<keyword id="KW-0694">RNA-binding</keyword>
<keyword id="KW-0699">rRNA-binding</keyword>
<protein>
    <recommendedName>
        <fullName evidence="1">Small ribosomal subunit protein uS4</fullName>
    </recommendedName>
    <alternativeName>
        <fullName evidence="2">30S ribosomal protein S4</fullName>
    </alternativeName>
</protein>
<comment type="function">
    <text evidence="1">One of the primary rRNA binding proteins, it binds directly to 16S rRNA where it nucleates assembly of the body of the 30S subunit.</text>
</comment>
<comment type="function">
    <text evidence="1">With S5 and S12 plays an important role in translational accuracy.</text>
</comment>
<comment type="subunit">
    <text evidence="1">Part of the 30S ribosomal subunit. Contacts protein S5. The interaction surface between S4 and S5 is involved in control of translational fidelity.</text>
</comment>
<comment type="similarity">
    <text evidence="1">Belongs to the universal ribosomal protein uS4 family.</text>
</comment>
<gene>
    <name evidence="1" type="primary">rpsD</name>
    <name type="ordered locus">CFF8240_0058</name>
</gene>
<reference key="1">
    <citation type="submission" date="2006-11" db="EMBL/GenBank/DDBJ databases">
        <title>Sequence of Campylobacter fetus subsp. fetus 82-40.</title>
        <authorList>
            <person name="Fouts D.E."/>
            <person name="Nelson K.E."/>
        </authorList>
    </citation>
    <scope>NUCLEOTIDE SEQUENCE [LARGE SCALE GENOMIC DNA]</scope>
    <source>
        <strain>82-40</strain>
    </source>
</reference>
<evidence type="ECO:0000255" key="1">
    <source>
        <dbReference type="HAMAP-Rule" id="MF_01306"/>
    </source>
</evidence>
<evidence type="ECO:0000305" key="2"/>